<comment type="function">
    <text evidence="1">Catalyzes the reversible isomerization of glucose-6-phosphate to fructose-6-phosphate.</text>
</comment>
<comment type="catalytic activity">
    <reaction evidence="1">
        <text>alpha-D-glucose 6-phosphate = beta-D-fructose 6-phosphate</text>
        <dbReference type="Rhea" id="RHEA:11816"/>
        <dbReference type="ChEBI" id="CHEBI:57634"/>
        <dbReference type="ChEBI" id="CHEBI:58225"/>
        <dbReference type="EC" id="5.3.1.9"/>
    </reaction>
</comment>
<comment type="pathway">
    <text evidence="1">Carbohydrate biosynthesis; gluconeogenesis.</text>
</comment>
<comment type="pathway">
    <text evidence="1">Carbohydrate degradation; glycolysis; D-glyceraldehyde 3-phosphate and glycerone phosphate from D-glucose: step 2/4.</text>
</comment>
<comment type="subcellular location">
    <subcellularLocation>
        <location evidence="1">Cytoplasm</location>
    </subcellularLocation>
</comment>
<comment type="similarity">
    <text evidence="1">Belongs to the GPI family.</text>
</comment>
<accession>A4XYC6</accession>
<proteinExistence type="inferred from homology"/>
<feature type="chain" id="PRO_1000014004" description="Glucose-6-phosphate isomerase">
    <location>
        <begin position="1"/>
        <end position="554"/>
    </location>
</feature>
<feature type="active site" description="Proton donor" evidence="1">
    <location>
        <position position="359"/>
    </location>
</feature>
<feature type="active site" evidence="1">
    <location>
        <position position="390"/>
    </location>
</feature>
<feature type="active site" evidence="1">
    <location>
        <position position="518"/>
    </location>
</feature>
<keyword id="KW-0963">Cytoplasm</keyword>
<keyword id="KW-0312">Gluconeogenesis</keyword>
<keyword id="KW-0324">Glycolysis</keyword>
<keyword id="KW-0413">Isomerase</keyword>
<dbReference type="EC" id="5.3.1.9" evidence="1"/>
<dbReference type="EMBL" id="CP000680">
    <property type="protein sequence ID" value="ABP86342.1"/>
    <property type="molecule type" value="Genomic_DNA"/>
</dbReference>
<dbReference type="SMR" id="A4XYC6"/>
<dbReference type="STRING" id="399739.Pmen_3594"/>
<dbReference type="KEGG" id="pmy:Pmen_3594"/>
<dbReference type="PATRIC" id="fig|399739.8.peg.3642"/>
<dbReference type="eggNOG" id="COG0166">
    <property type="taxonomic scope" value="Bacteria"/>
</dbReference>
<dbReference type="HOGENOM" id="CLU_017947_3_1_6"/>
<dbReference type="OrthoDB" id="140919at2"/>
<dbReference type="UniPathway" id="UPA00109">
    <property type="reaction ID" value="UER00181"/>
</dbReference>
<dbReference type="UniPathway" id="UPA00138"/>
<dbReference type="GO" id="GO:0005829">
    <property type="term" value="C:cytosol"/>
    <property type="evidence" value="ECO:0007669"/>
    <property type="project" value="TreeGrafter"/>
</dbReference>
<dbReference type="GO" id="GO:0097367">
    <property type="term" value="F:carbohydrate derivative binding"/>
    <property type="evidence" value="ECO:0007669"/>
    <property type="project" value="InterPro"/>
</dbReference>
<dbReference type="GO" id="GO:0004347">
    <property type="term" value="F:glucose-6-phosphate isomerase activity"/>
    <property type="evidence" value="ECO:0007669"/>
    <property type="project" value="UniProtKB-UniRule"/>
</dbReference>
<dbReference type="GO" id="GO:0048029">
    <property type="term" value="F:monosaccharide binding"/>
    <property type="evidence" value="ECO:0007669"/>
    <property type="project" value="TreeGrafter"/>
</dbReference>
<dbReference type="GO" id="GO:0006094">
    <property type="term" value="P:gluconeogenesis"/>
    <property type="evidence" value="ECO:0007669"/>
    <property type="project" value="UniProtKB-UniRule"/>
</dbReference>
<dbReference type="GO" id="GO:0051156">
    <property type="term" value="P:glucose 6-phosphate metabolic process"/>
    <property type="evidence" value="ECO:0007669"/>
    <property type="project" value="TreeGrafter"/>
</dbReference>
<dbReference type="GO" id="GO:0006096">
    <property type="term" value="P:glycolytic process"/>
    <property type="evidence" value="ECO:0007669"/>
    <property type="project" value="UniProtKB-UniRule"/>
</dbReference>
<dbReference type="CDD" id="cd05015">
    <property type="entry name" value="SIS_PGI_1"/>
    <property type="match status" value="1"/>
</dbReference>
<dbReference type="CDD" id="cd05016">
    <property type="entry name" value="SIS_PGI_2"/>
    <property type="match status" value="1"/>
</dbReference>
<dbReference type="FunFam" id="3.40.50.10490:FF:000018">
    <property type="entry name" value="Glucose-6-phosphate isomerase"/>
    <property type="match status" value="1"/>
</dbReference>
<dbReference type="Gene3D" id="1.10.1390.10">
    <property type="match status" value="1"/>
</dbReference>
<dbReference type="Gene3D" id="3.40.50.10490">
    <property type="entry name" value="Glucose-6-phosphate isomerase like protein, domain 1"/>
    <property type="match status" value="2"/>
</dbReference>
<dbReference type="HAMAP" id="MF_00473">
    <property type="entry name" value="G6P_isomerase"/>
    <property type="match status" value="1"/>
</dbReference>
<dbReference type="InterPro" id="IPR001672">
    <property type="entry name" value="G6P_Isomerase"/>
</dbReference>
<dbReference type="InterPro" id="IPR023096">
    <property type="entry name" value="G6P_Isomerase_C"/>
</dbReference>
<dbReference type="InterPro" id="IPR018189">
    <property type="entry name" value="Phosphoglucose_isomerase_CS"/>
</dbReference>
<dbReference type="InterPro" id="IPR046348">
    <property type="entry name" value="SIS_dom_sf"/>
</dbReference>
<dbReference type="InterPro" id="IPR035476">
    <property type="entry name" value="SIS_PGI_1"/>
</dbReference>
<dbReference type="InterPro" id="IPR035482">
    <property type="entry name" value="SIS_PGI_2"/>
</dbReference>
<dbReference type="NCBIfam" id="NF001211">
    <property type="entry name" value="PRK00179.1"/>
    <property type="match status" value="1"/>
</dbReference>
<dbReference type="PANTHER" id="PTHR11469">
    <property type="entry name" value="GLUCOSE-6-PHOSPHATE ISOMERASE"/>
    <property type="match status" value="1"/>
</dbReference>
<dbReference type="PANTHER" id="PTHR11469:SF1">
    <property type="entry name" value="GLUCOSE-6-PHOSPHATE ISOMERASE"/>
    <property type="match status" value="1"/>
</dbReference>
<dbReference type="Pfam" id="PF00342">
    <property type="entry name" value="PGI"/>
    <property type="match status" value="1"/>
</dbReference>
<dbReference type="PRINTS" id="PR00662">
    <property type="entry name" value="G6PISOMERASE"/>
</dbReference>
<dbReference type="SUPFAM" id="SSF53697">
    <property type="entry name" value="SIS domain"/>
    <property type="match status" value="1"/>
</dbReference>
<dbReference type="PROSITE" id="PS00765">
    <property type="entry name" value="P_GLUCOSE_ISOMERASE_1"/>
    <property type="match status" value="1"/>
</dbReference>
<dbReference type="PROSITE" id="PS00174">
    <property type="entry name" value="P_GLUCOSE_ISOMERASE_2"/>
    <property type="match status" value="1"/>
</dbReference>
<dbReference type="PROSITE" id="PS51463">
    <property type="entry name" value="P_GLUCOSE_ISOMERASE_3"/>
    <property type="match status" value="1"/>
</dbReference>
<evidence type="ECO:0000255" key="1">
    <source>
        <dbReference type="HAMAP-Rule" id="MF_00473"/>
    </source>
</evidence>
<name>G6PI_ECTM1</name>
<sequence length="554" mass="61868">MAYYQQPHDITRLPAWQALQQHRAEMAGFSMREAFAGDPRRFQRFSLDSCGLLLDYSKNLITEKSLELLIQLAEQADLHEAIAALYNGERVNASEGRAALHTALRSPIGRRLLVDGNDIIPEVHRVLNQVTELVSRIHSGLWRGYSEKPIKEVVNIGIGGSFLGPQLVSEALRPFTQRGVRCHYLANIDGSEFRELTARLDPETTLFIVSSKSFGTLETLKNTLAARDWYLAMGGPEEQLHRHFIAVTSNRKAAIEFGIGEENIFPMWDWVGGRYSLWSAIGLPIALAIGVSNFKELLAGAYAMDEHFTQAPLAENMPVLMALLGVWYTNFWGAQSHAILPYDHYLRNFTKHLQQLDMESNGKSVRQDGTPLDIATGPIIWGGVGCNGQHAYHQLLHQGRLLVPADFIVPVNSYNPLSDHHQWLFANCLSQAQALMQGKTREEAEVELRAKGLSEDEVQRLAPHKVIPGNRPSNILVMNRIAPFNLGALVALYEHKVFVQSAIWGINAFDQWGVELGKEMGKEVYQRLTGASGEPASDASTQGLIEHFRSQHRG</sequence>
<protein>
    <recommendedName>
        <fullName evidence="1">Glucose-6-phosphate isomerase</fullName>
        <shortName evidence="1">GPI</shortName>
        <ecNumber evidence="1">5.3.1.9</ecNumber>
    </recommendedName>
    <alternativeName>
        <fullName evidence="1">Phosphoglucose isomerase</fullName>
        <shortName evidence="1">PGI</shortName>
    </alternativeName>
    <alternativeName>
        <fullName evidence="1">Phosphohexose isomerase</fullName>
        <shortName evidence="1">PHI</shortName>
    </alternativeName>
</protein>
<reference key="1">
    <citation type="submission" date="2007-04" db="EMBL/GenBank/DDBJ databases">
        <title>Complete sequence of Pseudomonas mendocina ymp.</title>
        <authorList>
            <consortium name="US DOE Joint Genome Institute"/>
            <person name="Copeland A."/>
            <person name="Lucas S."/>
            <person name="Lapidus A."/>
            <person name="Barry K."/>
            <person name="Glavina del Rio T."/>
            <person name="Dalin E."/>
            <person name="Tice H."/>
            <person name="Pitluck S."/>
            <person name="Kiss H."/>
            <person name="Brettin T."/>
            <person name="Detter J.C."/>
            <person name="Bruce D."/>
            <person name="Han C."/>
            <person name="Schmutz J."/>
            <person name="Larimer F."/>
            <person name="Land M."/>
            <person name="Hauser L."/>
            <person name="Kyrpides N."/>
            <person name="Mikhailova N."/>
            <person name="Hersman L."/>
            <person name="Dubois J."/>
            <person name="Maurice P."/>
            <person name="Richardson P."/>
        </authorList>
    </citation>
    <scope>NUCLEOTIDE SEQUENCE [LARGE SCALE GENOMIC DNA]</scope>
    <source>
        <strain>ymp</strain>
    </source>
</reference>
<organism>
    <name type="scientific">Ectopseudomonas mendocina (strain ymp)</name>
    <name type="common">Pseudomonas mendocina</name>
    <dbReference type="NCBI Taxonomy" id="399739"/>
    <lineage>
        <taxon>Bacteria</taxon>
        <taxon>Pseudomonadati</taxon>
        <taxon>Pseudomonadota</taxon>
        <taxon>Gammaproteobacteria</taxon>
        <taxon>Pseudomonadales</taxon>
        <taxon>Pseudomonadaceae</taxon>
        <taxon>Ectopseudomonas</taxon>
    </lineage>
</organism>
<gene>
    <name evidence="1" type="primary">pgi</name>
    <name type="ordered locus">Pmen_3594</name>
</gene>